<name>RHAD_SALCH</name>
<sequence length="275" mass="30187">MQNITDSWFVQGMIKATSDAWLKGWDERNGGNLTLRLDETDIAPFAANFHEKPRYIALSQPMPLLANTPFIVTGSGKFFRNVQLDPAANLGVVKIDSDGAGYHILWGLTHDAVPTSELPAHFLSHCERIKATHGKDRVIMHCHATNLIALTYVLENNTALITRKLWEGSTECLVVFPDGVGILPWMVPGTDEIGQATAQEMQKHSLVLWPFHGVFGSGPTLDETFGLIDTAEKSAEVLVKIYSMGGMKQTITREELVALGKRFGVTPLASAVALY</sequence>
<comment type="function">
    <text evidence="1">Catalyzes the reversible cleavage of L-rhamnulose-1-phosphate to dihydroxyacetone phosphate (DHAP) and L-lactaldehyde.</text>
</comment>
<comment type="catalytic activity">
    <reaction evidence="1">
        <text>L-rhamnulose 1-phosphate = (S)-lactaldehyde + dihydroxyacetone phosphate</text>
        <dbReference type="Rhea" id="RHEA:19689"/>
        <dbReference type="ChEBI" id="CHEBI:18041"/>
        <dbReference type="ChEBI" id="CHEBI:57642"/>
        <dbReference type="ChEBI" id="CHEBI:58313"/>
        <dbReference type="EC" id="4.1.2.19"/>
    </reaction>
</comment>
<comment type="cofactor">
    <cofactor evidence="1">
        <name>Zn(2+)</name>
        <dbReference type="ChEBI" id="CHEBI:29105"/>
    </cofactor>
    <text evidence="1">Binds 1 zinc ion per subunit.</text>
</comment>
<comment type="pathway">
    <text evidence="1">Carbohydrate degradation; L-rhamnose degradation; glycerone phosphate from L-rhamnose: step 3/3.</text>
</comment>
<comment type="subunit">
    <text evidence="1">Homotetramer.</text>
</comment>
<comment type="subcellular location">
    <subcellularLocation>
        <location evidence="1">Cytoplasm</location>
    </subcellularLocation>
</comment>
<comment type="similarity">
    <text evidence="1">Belongs to the aldolase class II family. RhaD subfamily.</text>
</comment>
<dbReference type="EC" id="4.1.2.19" evidence="1"/>
<dbReference type="EMBL" id="AE017220">
    <property type="protein sequence ID" value="AAX67841.1"/>
    <property type="molecule type" value="Genomic_DNA"/>
</dbReference>
<dbReference type="RefSeq" id="WP_001179696.1">
    <property type="nucleotide sequence ID" value="NC_006905.1"/>
</dbReference>
<dbReference type="SMR" id="Q57HH1"/>
<dbReference type="KEGG" id="sec:SCH_3935"/>
<dbReference type="HOGENOM" id="CLU_076831_0_0_6"/>
<dbReference type="UniPathway" id="UPA00541">
    <property type="reaction ID" value="UER00603"/>
</dbReference>
<dbReference type="Proteomes" id="UP000000538">
    <property type="component" value="Chromosome"/>
</dbReference>
<dbReference type="GO" id="GO:0005829">
    <property type="term" value="C:cytosol"/>
    <property type="evidence" value="ECO:0007669"/>
    <property type="project" value="TreeGrafter"/>
</dbReference>
<dbReference type="GO" id="GO:0046872">
    <property type="term" value="F:metal ion binding"/>
    <property type="evidence" value="ECO:0007669"/>
    <property type="project" value="UniProtKB-KW"/>
</dbReference>
<dbReference type="GO" id="GO:0008994">
    <property type="term" value="F:rhamnulose-1-phosphate aldolase activity"/>
    <property type="evidence" value="ECO:0007669"/>
    <property type="project" value="UniProtKB-UniRule"/>
</dbReference>
<dbReference type="GO" id="GO:0019323">
    <property type="term" value="P:pentose catabolic process"/>
    <property type="evidence" value="ECO:0007669"/>
    <property type="project" value="TreeGrafter"/>
</dbReference>
<dbReference type="GO" id="GO:0019301">
    <property type="term" value="P:rhamnose catabolic process"/>
    <property type="evidence" value="ECO:0007669"/>
    <property type="project" value="UniProtKB-UniRule"/>
</dbReference>
<dbReference type="CDD" id="cd00398">
    <property type="entry name" value="Aldolase_II"/>
    <property type="match status" value="1"/>
</dbReference>
<dbReference type="FunFam" id="3.40.225.10:FF:000006">
    <property type="entry name" value="Rhamnulose-1-phosphate aldolase"/>
    <property type="match status" value="1"/>
</dbReference>
<dbReference type="Gene3D" id="3.40.225.10">
    <property type="entry name" value="Class II aldolase/adducin N-terminal domain"/>
    <property type="match status" value="1"/>
</dbReference>
<dbReference type="HAMAP" id="MF_00770">
    <property type="entry name" value="RhaD"/>
    <property type="match status" value="1"/>
</dbReference>
<dbReference type="InterPro" id="IPR050197">
    <property type="entry name" value="Aldolase_class_II_sugar_metab"/>
</dbReference>
<dbReference type="InterPro" id="IPR001303">
    <property type="entry name" value="Aldolase_II/adducin_N"/>
</dbReference>
<dbReference type="InterPro" id="IPR036409">
    <property type="entry name" value="Aldolase_II/adducin_N_sf"/>
</dbReference>
<dbReference type="InterPro" id="IPR013447">
    <property type="entry name" value="Rhamnulose-1-P_Aldolase"/>
</dbReference>
<dbReference type="NCBIfam" id="NF002963">
    <property type="entry name" value="PRK03634.1"/>
    <property type="match status" value="1"/>
</dbReference>
<dbReference type="NCBIfam" id="TIGR02624">
    <property type="entry name" value="rhamnu_1P_ald"/>
    <property type="match status" value="1"/>
</dbReference>
<dbReference type="PANTHER" id="PTHR22789">
    <property type="entry name" value="FUCULOSE PHOSPHATE ALDOLASE"/>
    <property type="match status" value="1"/>
</dbReference>
<dbReference type="PANTHER" id="PTHR22789:SF16">
    <property type="entry name" value="RHAMNULOSE-1-PHOSPHATE ALDOLASE"/>
    <property type="match status" value="1"/>
</dbReference>
<dbReference type="Pfam" id="PF00596">
    <property type="entry name" value="Aldolase_II"/>
    <property type="match status" value="1"/>
</dbReference>
<dbReference type="SMART" id="SM01007">
    <property type="entry name" value="Aldolase_II"/>
    <property type="match status" value="1"/>
</dbReference>
<dbReference type="SUPFAM" id="SSF53639">
    <property type="entry name" value="AraD/HMP-PK domain-like"/>
    <property type="match status" value="1"/>
</dbReference>
<protein>
    <recommendedName>
        <fullName evidence="1">Rhamnulose-1-phosphate aldolase</fullName>
        <ecNumber evidence="1">4.1.2.19</ecNumber>
    </recommendedName>
</protein>
<organism>
    <name type="scientific">Salmonella choleraesuis (strain SC-B67)</name>
    <dbReference type="NCBI Taxonomy" id="321314"/>
    <lineage>
        <taxon>Bacteria</taxon>
        <taxon>Pseudomonadati</taxon>
        <taxon>Pseudomonadota</taxon>
        <taxon>Gammaproteobacteria</taxon>
        <taxon>Enterobacterales</taxon>
        <taxon>Enterobacteriaceae</taxon>
        <taxon>Salmonella</taxon>
    </lineage>
</organism>
<keyword id="KW-0963">Cytoplasm</keyword>
<keyword id="KW-0456">Lyase</keyword>
<keyword id="KW-0479">Metal-binding</keyword>
<keyword id="KW-0684">Rhamnose metabolism</keyword>
<keyword id="KW-0862">Zinc</keyword>
<gene>
    <name evidence="1" type="primary">rhaD</name>
    <name type="ordered locus">SCH_3935</name>
</gene>
<reference key="1">
    <citation type="journal article" date="2005" name="Nucleic Acids Res.">
        <title>The genome sequence of Salmonella enterica serovar Choleraesuis, a highly invasive and resistant zoonotic pathogen.</title>
        <authorList>
            <person name="Chiu C.-H."/>
            <person name="Tang P."/>
            <person name="Chu C."/>
            <person name="Hu S."/>
            <person name="Bao Q."/>
            <person name="Yu J."/>
            <person name="Chou Y.-Y."/>
            <person name="Wang H.-S."/>
            <person name="Lee Y.-S."/>
        </authorList>
    </citation>
    <scope>NUCLEOTIDE SEQUENCE [LARGE SCALE GENOMIC DNA]</scope>
    <source>
        <strain>SC-B67</strain>
    </source>
</reference>
<proteinExistence type="inferred from homology"/>
<accession>Q57HH1</accession>
<feature type="chain" id="PRO_1000017342" description="Rhamnulose-1-phosphate aldolase">
    <location>
        <begin position="1"/>
        <end position="275"/>
    </location>
</feature>
<feature type="active site" evidence="1">
    <location>
        <position position="117"/>
    </location>
</feature>
<feature type="binding site" evidence="1">
    <location>
        <position position="141"/>
    </location>
    <ligand>
        <name>Zn(2+)</name>
        <dbReference type="ChEBI" id="CHEBI:29105"/>
    </ligand>
</feature>
<feature type="binding site" evidence="1">
    <location>
        <position position="143"/>
    </location>
    <ligand>
        <name>Zn(2+)</name>
        <dbReference type="ChEBI" id="CHEBI:29105"/>
    </ligand>
</feature>
<feature type="binding site" evidence="1">
    <location>
        <position position="212"/>
    </location>
    <ligand>
        <name>Zn(2+)</name>
        <dbReference type="ChEBI" id="CHEBI:29105"/>
    </ligand>
</feature>
<evidence type="ECO:0000255" key="1">
    <source>
        <dbReference type="HAMAP-Rule" id="MF_00770"/>
    </source>
</evidence>